<comment type="catalytic activity">
    <reaction evidence="1">
        <text>(S)-2,3,4,5-tetrahydrodipicolinate + succinyl-CoA + H2O = (S)-2-succinylamino-6-oxoheptanedioate + CoA</text>
        <dbReference type="Rhea" id="RHEA:17325"/>
        <dbReference type="ChEBI" id="CHEBI:15377"/>
        <dbReference type="ChEBI" id="CHEBI:15685"/>
        <dbReference type="ChEBI" id="CHEBI:16845"/>
        <dbReference type="ChEBI" id="CHEBI:57287"/>
        <dbReference type="ChEBI" id="CHEBI:57292"/>
        <dbReference type="EC" id="2.3.1.117"/>
    </reaction>
</comment>
<comment type="pathway">
    <text evidence="1">Amino-acid biosynthesis; L-lysine biosynthesis via DAP pathway; LL-2,6-diaminopimelate from (S)-tetrahydrodipicolinate (succinylase route): step 1/3.</text>
</comment>
<comment type="subunit">
    <text evidence="1">Homotrimer.</text>
</comment>
<comment type="subcellular location">
    <subcellularLocation>
        <location evidence="1">Cytoplasm</location>
    </subcellularLocation>
</comment>
<comment type="similarity">
    <text evidence="1">Belongs to the transferase hexapeptide repeat family.</text>
</comment>
<organism>
    <name type="scientific">Rickettsia bellii (strain RML369-C)</name>
    <dbReference type="NCBI Taxonomy" id="336407"/>
    <lineage>
        <taxon>Bacteria</taxon>
        <taxon>Pseudomonadati</taxon>
        <taxon>Pseudomonadota</taxon>
        <taxon>Alphaproteobacteria</taxon>
        <taxon>Rickettsiales</taxon>
        <taxon>Rickettsiaceae</taxon>
        <taxon>Rickettsieae</taxon>
        <taxon>Rickettsia</taxon>
        <taxon>belli group</taxon>
    </lineage>
</organism>
<reference key="1">
    <citation type="journal article" date="2006" name="PLoS Genet.">
        <title>Genome sequence of Rickettsia bellii illuminates the role of amoebae in gene exchanges between intracellular pathogens.</title>
        <authorList>
            <person name="Ogata H."/>
            <person name="La Scola B."/>
            <person name="Audic S."/>
            <person name="Renesto P."/>
            <person name="Blanc G."/>
            <person name="Robert C."/>
            <person name="Fournier P.-E."/>
            <person name="Claverie J.-M."/>
            <person name="Raoult D."/>
        </authorList>
    </citation>
    <scope>NUCLEOTIDE SEQUENCE [LARGE SCALE GENOMIC DNA]</scope>
    <source>
        <strain>RML369-C</strain>
    </source>
</reference>
<evidence type="ECO:0000255" key="1">
    <source>
        <dbReference type="HAMAP-Rule" id="MF_00811"/>
    </source>
</evidence>
<proteinExistence type="inferred from homology"/>
<gene>
    <name evidence="1" type="primary">dapD</name>
    <name type="ordered locus">RBE_1143</name>
</gene>
<protein>
    <recommendedName>
        <fullName evidence="1">2,3,4,5-tetrahydropyridine-2,6-dicarboxylate N-succinyltransferase</fullName>
        <ecNumber evidence="1">2.3.1.117</ecNumber>
    </recommendedName>
    <alternativeName>
        <fullName evidence="1">Tetrahydrodipicolinate N-succinyltransferase</fullName>
        <shortName evidence="1">THDP succinyltransferase</shortName>
        <shortName evidence="1">THP succinyltransferase</shortName>
        <shortName evidence="1">Tetrahydropicolinate succinylase</shortName>
    </alternativeName>
</protein>
<feature type="chain" id="PRO_0000288731" description="2,3,4,5-tetrahydropyridine-2,6-dicarboxylate N-succinyltransferase">
    <location>
        <begin position="1"/>
        <end position="275"/>
    </location>
</feature>
<feature type="binding site" evidence="1">
    <location>
        <position position="106"/>
    </location>
    <ligand>
        <name>substrate</name>
    </ligand>
</feature>
<feature type="binding site" evidence="1">
    <location>
        <position position="143"/>
    </location>
    <ligand>
        <name>substrate</name>
    </ligand>
</feature>
<dbReference type="EC" id="2.3.1.117" evidence="1"/>
<dbReference type="EMBL" id="CP000087">
    <property type="protein sequence ID" value="ABE05224.1"/>
    <property type="molecule type" value="Genomic_DNA"/>
</dbReference>
<dbReference type="RefSeq" id="WP_011477802.1">
    <property type="nucleotide sequence ID" value="NC_007940.1"/>
</dbReference>
<dbReference type="SMR" id="Q1RHE0"/>
<dbReference type="KEGG" id="rbe:RBE_1143"/>
<dbReference type="eggNOG" id="COG2171">
    <property type="taxonomic scope" value="Bacteria"/>
</dbReference>
<dbReference type="HOGENOM" id="CLU_050859_0_1_5"/>
<dbReference type="OrthoDB" id="9775362at2"/>
<dbReference type="UniPathway" id="UPA00034">
    <property type="reaction ID" value="UER00019"/>
</dbReference>
<dbReference type="Proteomes" id="UP000001951">
    <property type="component" value="Chromosome"/>
</dbReference>
<dbReference type="GO" id="GO:0005737">
    <property type="term" value="C:cytoplasm"/>
    <property type="evidence" value="ECO:0007669"/>
    <property type="project" value="UniProtKB-SubCell"/>
</dbReference>
<dbReference type="GO" id="GO:0008666">
    <property type="term" value="F:2,3,4,5-tetrahydropyridine-2,6-dicarboxylate N-succinyltransferase activity"/>
    <property type="evidence" value="ECO:0007669"/>
    <property type="project" value="UniProtKB-UniRule"/>
</dbReference>
<dbReference type="GO" id="GO:0019877">
    <property type="term" value="P:diaminopimelate biosynthetic process"/>
    <property type="evidence" value="ECO:0007669"/>
    <property type="project" value="UniProtKB-UniRule"/>
</dbReference>
<dbReference type="GO" id="GO:0009089">
    <property type="term" value="P:lysine biosynthetic process via diaminopimelate"/>
    <property type="evidence" value="ECO:0007669"/>
    <property type="project" value="UniProtKB-UniRule"/>
</dbReference>
<dbReference type="CDD" id="cd03350">
    <property type="entry name" value="LbH_THP_succinylT"/>
    <property type="match status" value="1"/>
</dbReference>
<dbReference type="Gene3D" id="2.160.10.10">
    <property type="entry name" value="Hexapeptide repeat proteins"/>
    <property type="match status" value="1"/>
</dbReference>
<dbReference type="Gene3D" id="1.10.166.10">
    <property type="entry name" value="Tetrahydrodipicolinate-N-succinyltransferase, N-terminal domain"/>
    <property type="match status" value="1"/>
</dbReference>
<dbReference type="HAMAP" id="MF_00811">
    <property type="entry name" value="DapD"/>
    <property type="match status" value="1"/>
</dbReference>
<dbReference type="InterPro" id="IPR005664">
    <property type="entry name" value="DapD_Trfase_Hexpep_rpt_fam"/>
</dbReference>
<dbReference type="InterPro" id="IPR001451">
    <property type="entry name" value="Hexapep"/>
</dbReference>
<dbReference type="InterPro" id="IPR023180">
    <property type="entry name" value="THP_succinylTrfase_dom1"/>
</dbReference>
<dbReference type="InterPro" id="IPR037133">
    <property type="entry name" value="THP_succinylTrfase_N_sf"/>
</dbReference>
<dbReference type="InterPro" id="IPR050179">
    <property type="entry name" value="Trans_hexapeptide_repeat"/>
</dbReference>
<dbReference type="InterPro" id="IPR011004">
    <property type="entry name" value="Trimer_LpxA-like_sf"/>
</dbReference>
<dbReference type="NCBIfam" id="TIGR00965">
    <property type="entry name" value="dapD"/>
    <property type="match status" value="1"/>
</dbReference>
<dbReference type="NCBIfam" id="NF008808">
    <property type="entry name" value="PRK11830.1"/>
    <property type="match status" value="1"/>
</dbReference>
<dbReference type="PANTHER" id="PTHR43300:SF10">
    <property type="entry name" value="2,3,4,5-TETRAHYDROPYRIDINE-2,6-DICARBOXYLATE N-ACETYLTRANSFERASE"/>
    <property type="match status" value="1"/>
</dbReference>
<dbReference type="PANTHER" id="PTHR43300">
    <property type="entry name" value="ACETYLTRANSFERASE"/>
    <property type="match status" value="1"/>
</dbReference>
<dbReference type="Pfam" id="PF00132">
    <property type="entry name" value="Hexapep"/>
    <property type="match status" value="1"/>
</dbReference>
<dbReference type="Pfam" id="PF14602">
    <property type="entry name" value="Hexapep_2"/>
    <property type="match status" value="1"/>
</dbReference>
<dbReference type="Pfam" id="PF14805">
    <property type="entry name" value="THDPS_N_2"/>
    <property type="match status" value="1"/>
</dbReference>
<dbReference type="SUPFAM" id="SSF51161">
    <property type="entry name" value="Trimeric LpxA-like enzymes"/>
    <property type="match status" value="1"/>
</dbReference>
<sequence length="275" mass="30345">MFTYIKEIEEAWQIKDKLLQDSVKLSAFKKTLQDVIENLNKGTIRVCEKQNSSWQVNDWVKKAILLYFMTTESQLYNNNYNSWYDKVAPKFPFDAELNKFKEAGIRKVPGSFVRTGTYIAKNVVIMPSFINIGAYIDEGTMIDTWATIGSCAQIGKNCHISGGTGIGGVLEPLQAKPVIIEDNCFIGARSEIAEGVIVEEGAVVSMGVFIGASTKIVYRDSGEIIYGIVPACSVVVPGVLPNKEADKPGLYCAVIVKQVDKNTRAKVSINELLRS</sequence>
<name>DAPD_RICBR</name>
<accession>Q1RHE0</accession>
<keyword id="KW-0012">Acyltransferase</keyword>
<keyword id="KW-0028">Amino-acid biosynthesis</keyword>
<keyword id="KW-0963">Cytoplasm</keyword>
<keyword id="KW-0220">Diaminopimelate biosynthesis</keyword>
<keyword id="KW-0457">Lysine biosynthesis</keyword>
<keyword id="KW-0677">Repeat</keyword>
<keyword id="KW-0808">Transferase</keyword>